<keyword id="KW-0328">Glycosyltransferase</keyword>
<keyword id="KW-0441">Lipid A biosynthesis</keyword>
<keyword id="KW-0444">Lipid biosynthesis</keyword>
<keyword id="KW-0443">Lipid metabolism</keyword>
<keyword id="KW-0808">Transferase</keyword>
<comment type="function">
    <text evidence="1">Condensation of UDP-2,3-diacylglucosamine and 2,3-diacylglucosamine-1-phosphate to form lipid A disaccharide, a precursor of lipid A, a phosphorylated glycolipid that anchors the lipopolysaccharide to the outer membrane of the cell.</text>
</comment>
<comment type="catalytic activity">
    <reaction evidence="1">
        <text>2-N,3-O-bis[(3R)-3-hydroxytetradecanoyl]-alpha-D-glucosaminyl 1-phosphate + UDP-2-N,3-O-bis[(3R)-3-hydroxytetradecanoyl]-alpha-D-glucosamine = lipid A disaccharide (E. coli) + UDP + H(+)</text>
        <dbReference type="Rhea" id="RHEA:22668"/>
        <dbReference type="ChEBI" id="CHEBI:15378"/>
        <dbReference type="ChEBI" id="CHEBI:57957"/>
        <dbReference type="ChEBI" id="CHEBI:58223"/>
        <dbReference type="ChEBI" id="CHEBI:58466"/>
        <dbReference type="ChEBI" id="CHEBI:78847"/>
    </reaction>
</comment>
<comment type="catalytic activity">
    <reaction evidence="1">
        <text>a lipid X + a UDP-2-N,3-O-bis[(3R)-3-hydroxyacyl]-alpha-D-glucosamine = a lipid A disaccharide + UDP + H(+)</text>
        <dbReference type="Rhea" id="RHEA:67828"/>
        <dbReference type="ChEBI" id="CHEBI:15378"/>
        <dbReference type="ChEBI" id="CHEBI:58223"/>
        <dbReference type="ChEBI" id="CHEBI:137748"/>
        <dbReference type="ChEBI" id="CHEBI:176338"/>
        <dbReference type="ChEBI" id="CHEBI:176343"/>
        <dbReference type="EC" id="2.4.1.182"/>
    </reaction>
</comment>
<comment type="pathway">
    <text evidence="1">Glycolipid biosynthesis; lipid IV(A) biosynthesis; lipid IV(A) from (3R)-3-hydroxytetradecanoyl-[acyl-carrier-protein] and UDP-N-acetyl-alpha-D-glucosamine: step 5/6.</text>
</comment>
<comment type="similarity">
    <text evidence="1">Belongs to the LpxB family.</text>
</comment>
<reference key="1">
    <citation type="journal article" date="2008" name="Genome Res.">
        <title>Comparative genome analysis of Salmonella enteritidis PT4 and Salmonella gallinarum 287/91 provides insights into evolutionary and host adaptation pathways.</title>
        <authorList>
            <person name="Thomson N.R."/>
            <person name="Clayton D.J."/>
            <person name="Windhorst D."/>
            <person name="Vernikos G."/>
            <person name="Davidson S."/>
            <person name="Churcher C."/>
            <person name="Quail M.A."/>
            <person name="Stevens M."/>
            <person name="Jones M.A."/>
            <person name="Watson M."/>
            <person name="Barron A."/>
            <person name="Layton A."/>
            <person name="Pickard D."/>
            <person name="Kingsley R.A."/>
            <person name="Bignell A."/>
            <person name="Clark L."/>
            <person name="Harris B."/>
            <person name="Ormond D."/>
            <person name="Abdellah Z."/>
            <person name="Brooks K."/>
            <person name="Cherevach I."/>
            <person name="Chillingworth T."/>
            <person name="Woodward J."/>
            <person name="Norberczak H."/>
            <person name="Lord A."/>
            <person name="Arrowsmith C."/>
            <person name="Jagels K."/>
            <person name="Moule S."/>
            <person name="Mungall K."/>
            <person name="Saunders M."/>
            <person name="Whitehead S."/>
            <person name="Chabalgoity J.A."/>
            <person name="Maskell D."/>
            <person name="Humphreys T."/>
            <person name="Roberts M."/>
            <person name="Barrow P.A."/>
            <person name="Dougan G."/>
            <person name="Parkhill J."/>
        </authorList>
    </citation>
    <scope>NUCLEOTIDE SEQUENCE [LARGE SCALE GENOMIC DNA]</scope>
    <source>
        <strain>287/91 / NCTC 13346</strain>
    </source>
</reference>
<evidence type="ECO:0000255" key="1">
    <source>
        <dbReference type="HAMAP-Rule" id="MF_00392"/>
    </source>
</evidence>
<gene>
    <name evidence="1" type="primary">lpxB</name>
    <name type="ordered locus">SG0233</name>
</gene>
<name>LPXB_SALG2</name>
<sequence length="382" mass="42452">MAAQRPLTIALVAGETSGDILGAGLIRALKARVPNARFVGVAGPRMQAEGCEAWYEMEELAVMGIVEVLGRLRRLLHIRADLTRRFTELKPDVFVGIDAPDFNITLEGNLKKQGIKTIHYVSPSVWAWRQKRVFKIGRSTHMVLAFLPFEKAFYDKFNVPCRFIGHTMADAMPLDPDKNAARDVLGIPHDAHCLALLPGSRGAEVEMLSADFLKTAQLLRQRYPDLEVVVPLVNAKRREQFEKIKAEVAPDLAVHLLDGMAREAMIASDAALLASGTAALECMLAKCPMVVGYRMKPFTFWLAKRLVKTEYVSLPNLLAGRELVKELLQEECEPQKLAEALLPLLANGKTSHAMHDTFRELHQQIRCNADEQAADAVLELAQ</sequence>
<dbReference type="EC" id="2.4.1.182" evidence="1"/>
<dbReference type="EMBL" id="AM933173">
    <property type="protein sequence ID" value="CAR36140.1"/>
    <property type="molecule type" value="Genomic_DNA"/>
</dbReference>
<dbReference type="RefSeq" id="WP_000741216.1">
    <property type="nucleotide sequence ID" value="NC_011274.1"/>
</dbReference>
<dbReference type="SMR" id="B5RHG7"/>
<dbReference type="CAZy" id="GT19">
    <property type="family name" value="Glycosyltransferase Family 19"/>
</dbReference>
<dbReference type="KEGG" id="seg:SG0233"/>
<dbReference type="HOGENOM" id="CLU_036577_3_0_6"/>
<dbReference type="UniPathway" id="UPA00359">
    <property type="reaction ID" value="UER00481"/>
</dbReference>
<dbReference type="Proteomes" id="UP000008321">
    <property type="component" value="Chromosome"/>
</dbReference>
<dbReference type="GO" id="GO:0016020">
    <property type="term" value="C:membrane"/>
    <property type="evidence" value="ECO:0007669"/>
    <property type="project" value="GOC"/>
</dbReference>
<dbReference type="GO" id="GO:0008915">
    <property type="term" value="F:lipid-A-disaccharide synthase activity"/>
    <property type="evidence" value="ECO:0007669"/>
    <property type="project" value="UniProtKB-UniRule"/>
</dbReference>
<dbReference type="GO" id="GO:0005543">
    <property type="term" value="F:phospholipid binding"/>
    <property type="evidence" value="ECO:0007669"/>
    <property type="project" value="TreeGrafter"/>
</dbReference>
<dbReference type="GO" id="GO:0009245">
    <property type="term" value="P:lipid A biosynthetic process"/>
    <property type="evidence" value="ECO:0007669"/>
    <property type="project" value="UniProtKB-UniRule"/>
</dbReference>
<dbReference type="CDD" id="cd01635">
    <property type="entry name" value="Glycosyltransferase_GTB-type"/>
    <property type="match status" value="1"/>
</dbReference>
<dbReference type="HAMAP" id="MF_00392">
    <property type="entry name" value="LpxB"/>
    <property type="match status" value="1"/>
</dbReference>
<dbReference type="InterPro" id="IPR003835">
    <property type="entry name" value="Glyco_trans_19"/>
</dbReference>
<dbReference type="NCBIfam" id="TIGR00215">
    <property type="entry name" value="lpxB"/>
    <property type="match status" value="1"/>
</dbReference>
<dbReference type="PANTHER" id="PTHR30372">
    <property type="entry name" value="LIPID-A-DISACCHARIDE SYNTHASE"/>
    <property type="match status" value="1"/>
</dbReference>
<dbReference type="PANTHER" id="PTHR30372:SF4">
    <property type="entry name" value="LIPID-A-DISACCHARIDE SYNTHASE, MITOCHONDRIAL-RELATED"/>
    <property type="match status" value="1"/>
</dbReference>
<dbReference type="Pfam" id="PF02684">
    <property type="entry name" value="LpxB"/>
    <property type="match status" value="1"/>
</dbReference>
<dbReference type="SUPFAM" id="SSF53756">
    <property type="entry name" value="UDP-Glycosyltransferase/glycogen phosphorylase"/>
    <property type="match status" value="1"/>
</dbReference>
<proteinExistence type="inferred from homology"/>
<protein>
    <recommendedName>
        <fullName evidence="1">Lipid-A-disaccharide synthase</fullName>
        <ecNumber evidence="1">2.4.1.182</ecNumber>
    </recommendedName>
</protein>
<organism>
    <name type="scientific">Salmonella gallinarum (strain 287/91 / NCTC 13346)</name>
    <dbReference type="NCBI Taxonomy" id="550538"/>
    <lineage>
        <taxon>Bacteria</taxon>
        <taxon>Pseudomonadati</taxon>
        <taxon>Pseudomonadota</taxon>
        <taxon>Gammaproteobacteria</taxon>
        <taxon>Enterobacterales</taxon>
        <taxon>Enterobacteriaceae</taxon>
        <taxon>Salmonella</taxon>
    </lineage>
</organism>
<feature type="chain" id="PRO_1000123060" description="Lipid-A-disaccharide synthase">
    <location>
        <begin position="1"/>
        <end position="382"/>
    </location>
</feature>
<accession>B5RHG7</accession>